<feature type="chain" id="PRO_0000459488" description="NADH-ubiquinone oxidoreductase subunit NUO2">
    <location>
        <begin position="1"/>
        <end position="194"/>
    </location>
</feature>
<name>NUZM_CANAL</name>
<keyword id="KW-0520">NAD</keyword>
<keyword id="KW-0560">Oxidoreductase</keyword>
<keyword id="KW-1185">Reference proteome</keyword>
<keyword id="KW-1278">Translocase</keyword>
<keyword id="KW-0830">Ubiquinone</keyword>
<keyword id="KW-0843">Virulence</keyword>
<proteinExistence type="evidence at protein level"/>
<evidence type="ECO:0000269" key="1">
    <source>
    </source>
</evidence>
<evidence type="ECO:0000269" key="2">
    <source>
    </source>
</evidence>
<evidence type="ECO:0000303" key="3">
    <source>
    </source>
</evidence>
<protein>
    <recommendedName>
        <fullName evidence="3">NADH-ubiquinone oxidoreductase subunit NUO2</fullName>
    </recommendedName>
</protein>
<sequence length="194" mass="21549">MSGGPVPVWKKYTTRPQGIWEKIRQLLVLVPNRSSGNPLVSLFRQVPPGERIKEAQNYKDPVTIPAGDIKGNPYFKRDYRRNYPQVHTFNQTKISGLLNLGSESNPRISIGEKGNKELAVFTNGQDVSLASTLKSVPASVVKGEVLGKSGEPIVAPSLNKFKWEILPEPVHGMYSEAYPCRIFTEKKVRSQSSA</sequence>
<reference key="1">
    <citation type="journal article" date="2004" name="Proc. Natl. Acad. Sci. U.S.A.">
        <title>The diploid genome sequence of Candida albicans.</title>
        <authorList>
            <person name="Jones T."/>
            <person name="Federspiel N.A."/>
            <person name="Chibana H."/>
            <person name="Dungan J."/>
            <person name="Kalman S."/>
            <person name="Magee B.B."/>
            <person name="Newport G."/>
            <person name="Thorstenson Y.R."/>
            <person name="Agabian N."/>
            <person name="Magee P.T."/>
            <person name="Davis R.W."/>
            <person name="Scherer S."/>
        </authorList>
    </citation>
    <scope>NUCLEOTIDE SEQUENCE [LARGE SCALE GENOMIC DNA]</scope>
    <source>
        <strain>SC5314 / ATCC MYA-2876</strain>
    </source>
</reference>
<reference key="2">
    <citation type="journal article" date="2007" name="Genome Biol.">
        <title>Assembly of the Candida albicans genome into sixteen supercontigs aligned on the eight chromosomes.</title>
        <authorList>
            <person name="van het Hoog M."/>
            <person name="Rast T.J."/>
            <person name="Martchenko M."/>
            <person name="Grindle S."/>
            <person name="Dignard D."/>
            <person name="Hogues H."/>
            <person name="Cuomo C."/>
            <person name="Berriman M."/>
            <person name="Scherer S."/>
            <person name="Magee B.B."/>
            <person name="Whiteway M."/>
            <person name="Chibana H."/>
            <person name="Nantel A."/>
            <person name="Magee P.T."/>
        </authorList>
    </citation>
    <scope>GENOME REANNOTATION</scope>
    <source>
        <strain>SC5314 / ATCC MYA-2876</strain>
    </source>
</reference>
<reference key="3">
    <citation type="journal article" date="2013" name="Genome Biol.">
        <title>Assembly of a phased diploid Candida albicans genome facilitates allele-specific measurements and provides a simple model for repeat and indel structure.</title>
        <authorList>
            <person name="Muzzey D."/>
            <person name="Schwartz K."/>
            <person name="Weissman J.S."/>
            <person name="Sherlock G."/>
        </authorList>
    </citation>
    <scope>NUCLEOTIDE SEQUENCE [LARGE SCALE GENOMIC DNA]</scope>
    <scope>GENOME REANNOTATION</scope>
    <source>
        <strain>SC5314 / ATCC MYA-2876</strain>
    </source>
</reference>
<reference key="4">
    <citation type="journal article" date="2015" name="Cell. Microbiol.">
        <title>Fungal-specific subunits of the Candida albicans mitochondrial complex I drive diverse cell functions including cell wall synthesis.</title>
        <authorList>
            <person name="She X."/>
            <person name="Khamooshi K."/>
            <person name="Gao Y."/>
            <person name="Shen Y."/>
            <person name="Lv Y."/>
            <person name="Calderone R."/>
            <person name="Fonzi W."/>
            <person name="Liu W."/>
            <person name="Li D."/>
        </authorList>
    </citation>
    <scope>FUNCTION</scope>
    <scope>SUBUNIT</scope>
    <scope>DISRUPTION PHENOTYPE</scope>
</reference>
<reference key="5">
    <citation type="journal article" date="2015" name="J. Proteomics">
        <title>Candida albicans cell shaving uncovers new proteins involved in cell wall integrity, yeast to hypha transition, stress response and host-pathogen interaction.</title>
        <authorList>
            <person name="Gil-Bona A."/>
            <person name="Parra-Giraldo C.M."/>
            <person name="Hernaez M.L."/>
            <person name="Reales-Calderon J.A."/>
            <person name="Solis N.V."/>
            <person name="Filler S.G."/>
            <person name="Monteoliva L."/>
            <person name="Gil C."/>
        </authorList>
    </citation>
    <scope>FUNCTION</scope>
    <scope>DISRUPTION PHENOTYPE</scope>
</reference>
<comment type="function">
    <text evidence="1 2">Fungal-specific subunit of the mitochondrial membrane respiratory chain NADH dehydrogenase (Complex I). Complex I functions in the transfer of electrons from NADH to the respiratory chain. The immediate electron acceptor for the enzyme is believed to be ubiquinone (PubMed:25801605). Plays a role in cell wall integrity and is involved in osmotic and oxidative resistance, yeast to hypha transition, and virulence via providing the ability to damage and invade host cells such as oral epithelial cells (PubMed:25801605, PubMed:26087349).</text>
</comment>
<comment type="disruption phenotype">
    <text evidence="1 2">Reduces mitochondrial NADH dehydrogenase activity (PubMed:25801605). Leads to growth defects on glycerol and oleic acid, and shows reduced oxygen consumption rates (PubMed:25801605). Decreases the mitochondrial membrane potential (PubMed:25801605). Shortens the chronological life span (CLS) (PubMed:25801605). Leads to sensitivity to both cell wall-damaging agents calcofluor white and Congo red, as well as to thermosensitivity (PubMed:26087349). Also increases the sensitivity to oxidative stress agents H(2)O(2) and menadione, as well as to osmotic stress agent KCl (PubMed:26087349). Impairs the yeast to hypha transition (PubMed:26087349). Causes significantly more damage to the host macrophages and results in significantly less damage to host oral epithelial cells (PubMed:26087349). Results in avirulence and reduced fungal growth in a mouse model of systemic candidiasis (PubMed:25801605).</text>
</comment>
<dbReference type="EMBL" id="CP017625">
    <property type="protein sequence ID" value="AOW28325.1"/>
    <property type="molecule type" value="Genomic_DNA"/>
</dbReference>
<dbReference type="RefSeq" id="XP_719984.1">
    <property type="nucleotide sequence ID" value="XM_714891.1"/>
</dbReference>
<dbReference type="SMR" id="Q5AEI1"/>
<dbReference type="STRING" id="237561.Q5AEI1"/>
<dbReference type="EnsemblFungi" id="C3_02940C_A-T">
    <property type="protein sequence ID" value="C3_02940C_A-T-p1"/>
    <property type="gene ID" value="C3_02940C_A"/>
</dbReference>
<dbReference type="GeneID" id="3638381"/>
<dbReference type="KEGG" id="cal:CAALFM_C302940CA"/>
<dbReference type="CGD" id="CAL0000195285">
    <property type="gene designation" value="NUO2"/>
</dbReference>
<dbReference type="VEuPathDB" id="FungiDB:C3_02940C_A"/>
<dbReference type="eggNOG" id="ENOG502S2AU">
    <property type="taxonomic scope" value="Eukaryota"/>
</dbReference>
<dbReference type="HOGENOM" id="CLU_081626_0_0_1"/>
<dbReference type="InParanoid" id="Q5AEI1"/>
<dbReference type="OMA" id="GYPCRTF"/>
<dbReference type="OrthoDB" id="2093493at2759"/>
<dbReference type="Proteomes" id="UP000000559">
    <property type="component" value="Chromosome 3"/>
</dbReference>
<dbReference type="GO" id="GO:0016020">
    <property type="term" value="C:membrane"/>
    <property type="evidence" value="ECO:0000314"/>
    <property type="project" value="CGD"/>
</dbReference>
<dbReference type="GO" id="GO:0005739">
    <property type="term" value="C:mitochondrion"/>
    <property type="evidence" value="ECO:0007669"/>
    <property type="project" value="GOC"/>
</dbReference>
<dbReference type="GO" id="GO:0016491">
    <property type="term" value="F:oxidoreductase activity"/>
    <property type="evidence" value="ECO:0007669"/>
    <property type="project" value="UniProtKB-KW"/>
</dbReference>
<dbReference type="GO" id="GO:0032981">
    <property type="term" value="P:mitochondrial respiratory chain complex I assembly"/>
    <property type="evidence" value="ECO:0000315"/>
    <property type="project" value="CGD"/>
</dbReference>
<dbReference type="GO" id="GO:0000278">
    <property type="term" value="P:mitotic cell cycle"/>
    <property type="evidence" value="ECO:0000315"/>
    <property type="project" value="CGD"/>
</dbReference>
<dbReference type="GO" id="GO:0008361">
    <property type="term" value="P:regulation of cell size"/>
    <property type="evidence" value="ECO:0000315"/>
    <property type="project" value="CGD"/>
</dbReference>
<dbReference type="CDD" id="cd22849">
    <property type="entry name" value="NuzM"/>
    <property type="match status" value="1"/>
</dbReference>
<dbReference type="InterPro" id="IPR016813">
    <property type="entry name" value="NADH_Ub_cplx-1_21kDa"/>
</dbReference>
<dbReference type="PANTHER" id="PTHR37325">
    <property type="entry name" value="OXIDOREDUCTASE 21 KDA SUBUNIT, PUTATIVE (AFU_ORTHOLOGUE AFUA_4G05910)-RELATED"/>
    <property type="match status" value="1"/>
</dbReference>
<dbReference type="PANTHER" id="PTHR37325:SF1">
    <property type="entry name" value="OXIDOREDUCTASE 21 KDA SUBUNIT, PUTATIVE (AFU_ORTHOLOGUE AFUA_4G05910)-RELATED"/>
    <property type="match status" value="1"/>
</dbReference>
<dbReference type="PIRSF" id="PIRSF022976">
    <property type="entry name" value="NADH_Oxi_21kDa"/>
    <property type="match status" value="1"/>
</dbReference>
<gene>
    <name evidence="3" type="primary">NUO2</name>
    <name type="ordered locus">CAALFM_C302940CA</name>
    <name type="ordered locus">orf19.7919</name>
</gene>
<organism>
    <name type="scientific">Candida albicans (strain SC5314 / ATCC MYA-2876)</name>
    <name type="common">Yeast</name>
    <dbReference type="NCBI Taxonomy" id="237561"/>
    <lineage>
        <taxon>Eukaryota</taxon>
        <taxon>Fungi</taxon>
        <taxon>Dikarya</taxon>
        <taxon>Ascomycota</taxon>
        <taxon>Saccharomycotina</taxon>
        <taxon>Pichiomycetes</taxon>
        <taxon>Debaryomycetaceae</taxon>
        <taxon>Candida/Lodderomyces clade</taxon>
        <taxon>Candida</taxon>
    </lineage>
</organism>
<accession>Q5AEI1</accession>